<name>IF1_SERP5</name>
<sequence length="72" mass="8236">MAKEDNIEMQGTVLDTLPNTMFRVELENGHVVTAHISGKMRKNYIRILTGDKVTVELTPYDLSKGRIVFRSR</sequence>
<gene>
    <name evidence="1" type="primary">infA</name>
    <name type="ordered locus">Spro_1675</name>
</gene>
<keyword id="KW-0963">Cytoplasm</keyword>
<keyword id="KW-0396">Initiation factor</keyword>
<keyword id="KW-0648">Protein biosynthesis</keyword>
<keyword id="KW-0694">RNA-binding</keyword>
<keyword id="KW-0699">rRNA-binding</keyword>
<dbReference type="EMBL" id="CP000826">
    <property type="protein sequence ID" value="ABV40779.1"/>
    <property type="molecule type" value="Genomic_DNA"/>
</dbReference>
<dbReference type="SMR" id="A8GCD9"/>
<dbReference type="STRING" id="399741.Spro_1675"/>
<dbReference type="KEGG" id="spe:Spro_1675"/>
<dbReference type="eggNOG" id="COG0361">
    <property type="taxonomic scope" value="Bacteria"/>
</dbReference>
<dbReference type="HOGENOM" id="CLU_151267_1_0_6"/>
<dbReference type="OrthoDB" id="9803250at2"/>
<dbReference type="GO" id="GO:0005829">
    <property type="term" value="C:cytosol"/>
    <property type="evidence" value="ECO:0007669"/>
    <property type="project" value="TreeGrafter"/>
</dbReference>
<dbReference type="GO" id="GO:0043022">
    <property type="term" value="F:ribosome binding"/>
    <property type="evidence" value="ECO:0007669"/>
    <property type="project" value="UniProtKB-UniRule"/>
</dbReference>
<dbReference type="GO" id="GO:0019843">
    <property type="term" value="F:rRNA binding"/>
    <property type="evidence" value="ECO:0007669"/>
    <property type="project" value="UniProtKB-UniRule"/>
</dbReference>
<dbReference type="GO" id="GO:0003743">
    <property type="term" value="F:translation initiation factor activity"/>
    <property type="evidence" value="ECO:0007669"/>
    <property type="project" value="UniProtKB-UniRule"/>
</dbReference>
<dbReference type="CDD" id="cd04451">
    <property type="entry name" value="S1_IF1"/>
    <property type="match status" value="1"/>
</dbReference>
<dbReference type="FunFam" id="2.40.50.140:FF:000002">
    <property type="entry name" value="Translation initiation factor IF-1"/>
    <property type="match status" value="1"/>
</dbReference>
<dbReference type="Gene3D" id="2.40.50.140">
    <property type="entry name" value="Nucleic acid-binding proteins"/>
    <property type="match status" value="1"/>
</dbReference>
<dbReference type="HAMAP" id="MF_00075">
    <property type="entry name" value="IF_1"/>
    <property type="match status" value="1"/>
</dbReference>
<dbReference type="InterPro" id="IPR012340">
    <property type="entry name" value="NA-bd_OB-fold"/>
</dbReference>
<dbReference type="InterPro" id="IPR006196">
    <property type="entry name" value="RNA-binding_domain_S1_IF1"/>
</dbReference>
<dbReference type="InterPro" id="IPR003029">
    <property type="entry name" value="S1_domain"/>
</dbReference>
<dbReference type="InterPro" id="IPR004368">
    <property type="entry name" value="TIF_IF1"/>
</dbReference>
<dbReference type="NCBIfam" id="TIGR00008">
    <property type="entry name" value="infA"/>
    <property type="match status" value="1"/>
</dbReference>
<dbReference type="PANTHER" id="PTHR33370">
    <property type="entry name" value="TRANSLATION INITIATION FACTOR IF-1, CHLOROPLASTIC"/>
    <property type="match status" value="1"/>
</dbReference>
<dbReference type="PANTHER" id="PTHR33370:SF1">
    <property type="entry name" value="TRANSLATION INITIATION FACTOR IF-1, CHLOROPLASTIC"/>
    <property type="match status" value="1"/>
</dbReference>
<dbReference type="Pfam" id="PF01176">
    <property type="entry name" value="eIF-1a"/>
    <property type="match status" value="1"/>
</dbReference>
<dbReference type="SMART" id="SM00316">
    <property type="entry name" value="S1"/>
    <property type="match status" value="1"/>
</dbReference>
<dbReference type="SUPFAM" id="SSF50249">
    <property type="entry name" value="Nucleic acid-binding proteins"/>
    <property type="match status" value="1"/>
</dbReference>
<dbReference type="PROSITE" id="PS50832">
    <property type="entry name" value="S1_IF1_TYPE"/>
    <property type="match status" value="1"/>
</dbReference>
<organism>
    <name type="scientific">Serratia proteamaculans (strain 568)</name>
    <dbReference type="NCBI Taxonomy" id="399741"/>
    <lineage>
        <taxon>Bacteria</taxon>
        <taxon>Pseudomonadati</taxon>
        <taxon>Pseudomonadota</taxon>
        <taxon>Gammaproteobacteria</taxon>
        <taxon>Enterobacterales</taxon>
        <taxon>Yersiniaceae</taxon>
        <taxon>Serratia</taxon>
    </lineage>
</organism>
<evidence type="ECO:0000255" key="1">
    <source>
        <dbReference type="HAMAP-Rule" id="MF_00075"/>
    </source>
</evidence>
<proteinExistence type="inferred from homology"/>
<feature type="chain" id="PRO_0000338914" description="Translation initiation factor IF-1">
    <location>
        <begin position="1"/>
        <end position="72"/>
    </location>
</feature>
<feature type="domain" description="S1-like" evidence="1">
    <location>
        <begin position="1"/>
        <end position="72"/>
    </location>
</feature>
<protein>
    <recommendedName>
        <fullName evidence="1">Translation initiation factor IF-1</fullName>
    </recommendedName>
</protein>
<reference key="1">
    <citation type="submission" date="2007-09" db="EMBL/GenBank/DDBJ databases">
        <title>Complete sequence of chromosome of Serratia proteamaculans 568.</title>
        <authorList>
            <consortium name="US DOE Joint Genome Institute"/>
            <person name="Copeland A."/>
            <person name="Lucas S."/>
            <person name="Lapidus A."/>
            <person name="Barry K."/>
            <person name="Glavina del Rio T."/>
            <person name="Dalin E."/>
            <person name="Tice H."/>
            <person name="Pitluck S."/>
            <person name="Chain P."/>
            <person name="Malfatti S."/>
            <person name="Shin M."/>
            <person name="Vergez L."/>
            <person name="Schmutz J."/>
            <person name="Larimer F."/>
            <person name="Land M."/>
            <person name="Hauser L."/>
            <person name="Kyrpides N."/>
            <person name="Kim E."/>
            <person name="Taghavi S."/>
            <person name="Newman L."/>
            <person name="Vangronsveld J."/>
            <person name="van der Lelie D."/>
            <person name="Richardson P."/>
        </authorList>
    </citation>
    <scope>NUCLEOTIDE SEQUENCE [LARGE SCALE GENOMIC DNA]</scope>
    <source>
        <strain>568</strain>
    </source>
</reference>
<accession>A8GCD9</accession>
<comment type="function">
    <text evidence="1">One of the essential components for the initiation of protein synthesis. Stabilizes the binding of IF-2 and IF-3 on the 30S subunit to which N-formylmethionyl-tRNA(fMet) subsequently binds. Helps modulate mRNA selection, yielding the 30S pre-initiation complex (PIC). Upon addition of the 50S ribosomal subunit IF-1, IF-2 and IF-3 are released leaving the mature 70S translation initiation complex.</text>
</comment>
<comment type="subunit">
    <text evidence="1">Component of the 30S ribosomal translation pre-initiation complex which assembles on the 30S ribosome in the order IF-2 and IF-3, IF-1 and N-formylmethionyl-tRNA(fMet); mRNA recruitment can occur at any time during PIC assembly.</text>
</comment>
<comment type="subcellular location">
    <subcellularLocation>
        <location evidence="1">Cytoplasm</location>
    </subcellularLocation>
</comment>
<comment type="similarity">
    <text evidence="1">Belongs to the IF-1 family.</text>
</comment>